<sequence length="1956" mass="218069">MSFKEAKPGERGKNPEDHGRKQTASWINGMEAGNQPSTSGEKKSHHWRSYKLIIDPALRKGQHKLYRYDGLSFSMPNSGVPPVDSVRDPRIGRIWTKTKELDLPVPKLKIDEFYVGPVPPKQVTFAKLNDNIRENFLGDMCKKYGEVEEVEILYNPKNKKHLGIAKVIFASVKGARDAVKHLHNTSVMGNIIHVELDTKGETRMRFYDLLVNGFYTPQTLPVGSDLDASPTVNETPQVVESVKRTKETAIGPSVTPNSSTPFSHDTAYSSSRQGTPNSYSQFTPQSQGTPHTPRLGTPFSQDSSYSSRQTTPAFHYGQDSGFKPRRHENKFTDAYNRRPGHHYVHSSGSYRGTEHTFNVTRPQPEPVQVPRTPPLSHSSGNYKSAFSPYQGNTVFPQTDESQYPQTSRDMEYRRTGPQTSDSYSDAGCNSASLELKPVKEKPEEPPPPEPDSTTEQKASFSQTPERCETPGTPTLEAELQHNSLDTRIAMLLKEQRTQLHLIAGDQNSDNEIRMEGSPISSSSSQLSPIPPYSSGSRYQDVTPSSRPSSTGLEDISPTPLPDSDDDDEPIPGTASLCQNSRSASPIDQINQSGRKTESLDKKELVAGDETPTSEKMDEGHPSSGEDMEISDDEVTPSPITSAECAITSSSVISSVIPIPPPGFPPLPPPPPPQPGFPMPPPLPPPPPPTHPSVTVPPPPLPAPPGVPPHHILHHPPPYHHFPVMQGEMMNVLGNHWGGMTMSFQMQTQMLSRMMQGQGSYPYHHFMGGSMQFGNQHPYRPFAISAHLTRGQPWPPFPKFDPSVPPPGYEHKKEDPHKATVDGVLQVIVKELKAIMKRDLNRKMVEVVAFRAFDEWWDKKERLAKQSLTPVKSGESKEEDKQKTKEHITSSLLESWNKGEGLGFEGIGLGIGLRGAIRLPSFKVKRKEPPDAALAGDQKRIRPSHSVDDEDEESERDRDISSTASDLSKKDADAVNNRRRPARPLDSEGEEEVESEGDDGETSDKEDSSSEKEDQDDGSVSALSSKKQLYGDKEGDDEDDDTQSSGKEEDLVSEEEDTTSVASSRAEMDSSDESEESSEYESSSDSDEKEEEDDEEEELVFGDDQSEDQDLGQEYEVETDREEDFFRENLSECSSLPKAGDVELEDEMQKVEEDVARQTTQETLHLRKKNLDVPLVESKECKQDTLDKVEKLFAVPMQEEVFKEHEKAPSPMNEEEEYIELQLEPVPLVPEGAAPAAQEPVIIRPLTPTGAFGETGPVLKLEEPKLQVNLTQFATEDEELYPRTPGRDTAAHSDTEVTFQPGLKVAPSSLPFLPSHNKEEECLLPPEKHAGHLTVTKMLSEEDLPRTPGRDIVVKSSHLGKSQSTETVPATPGSDAPLTGSSLTLTSPHIPGSPFSYLSQSPGIINSGIPRTPGRDFNFTPTFPESNSIFPCHPSGKKPSVDEPDEKSFKEPTSASLTMNSVPSPIPFASPPRGLPHMDIRLGADDLESSDTPAYLSDKLLSEESECEFTKVHLTSTDESAPSPPLPPAEKRKGDRSKKPLSAHEFETEKNYETSSAVAMSEGALGKQMFIGQPDAVSGIKDPAAVPLDFRNDSLSENTVHEPIIQKVPLKELENQWNEVLKEEEDITKHKKSRNSRHNNRYDEFSTVPSPEFSPPRAMFKPRSEFEEMTILYDIWNGGIDDEDIKYMCITYDRLLQQDNGMDWLNDTLWVYHPSTSVYSPKKKKRDDGLREHVTGCARSEGYYKIDKKDKLKYLINNRSLTEELPIDTQGKSIPAQPQASTRAGSERRSEQRRLLSSFTGSCDSDLLKFNQLKFRKKKLRFCKSHIHDWGLFAMEPIIADEMVIEYVGQNIRQVIADMREKRYEDEGIGSSYMFRVDHDTIIDATKCGNFARFINHSCNPNCYAKVITVESQKKIVIYSKQYINVNEEITYDYKFPIEDVKIPCLCGAENCRGTLN</sequence>
<evidence type="ECO:0000250" key="1">
    <source>
        <dbReference type="UniProtKB" id="O15047"/>
    </source>
</evidence>
<evidence type="ECO:0000250" key="2">
    <source>
        <dbReference type="UniProtKB" id="P38827"/>
    </source>
</evidence>
<evidence type="ECO:0000250" key="3">
    <source>
        <dbReference type="UniProtKB" id="Q9UPS6"/>
    </source>
</evidence>
<evidence type="ECO:0000255" key="4">
    <source>
        <dbReference type="PROSITE-ProRule" id="PRU00155"/>
    </source>
</evidence>
<evidence type="ECO:0000255" key="5">
    <source>
        <dbReference type="PROSITE-ProRule" id="PRU00176"/>
    </source>
</evidence>
<evidence type="ECO:0000255" key="6">
    <source>
        <dbReference type="PROSITE-ProRule" id="PRU00190"/>
    </source>
</evidence>
<evidence type="ECO:0000256" key="7">
    <source>
        <dbReference type="SAM" id="MobiDB-lite"/>
    </source>
</evidence>
<protein>
    <recommendedName>
        <fullName>Histone-lysine N-methyltransferase SETD1B</fullName>
        <ecNumber evidence="3">2.1.1.354</ecNumber>
    </recommendedName>
    <alternativeName>
        <fullName>SET domain-containing protein 1B</fullName>
    </alternativeName>
</protein>
<comment type="function">
    <text evidence="1">Histone methyltransferase that specifically methylates 'Lys-4' of histone H3, when part of the SET1 histone methyltransferase (HMT) complex, but not if the neighboring 'Lys-9' residue is already methylated. H3 'Lys-4' methylation represents a specific tag for epigenetic transcriptional activation.</text>
</comment>
<comment type="catalytic activity">
    <reaction evidence="3">
        <text>L-lysyl(4)-[histone H3] + 3 S-adenosyl-L-methionine = N(6),N(6),N(6)-trimethyl-L-lysyl(4)-[histone H3] + 3 S-adenosyl-L-homocysteine + 3 H(+)</text>
        <dbReference type="Rhea" id="RHEA:60260"/>
        <dbReference type="Rhea" id="RHEA-COMP:15537"/>
        <dbReference type="Rhea" id="RHEA-COMP:15547"/>
        <dbReference type="ChEBI" id="CHEBI:15378"/>
        <dbReference type="ChEBI" id="CHEBI:29969"/>
        <dbReference type="ChEBI" id="CHEBI:57856"/>
        <dbReference type="ChEBI" id="CHEBI:59789"/>
        <dbReference type="ChEBI" id="CHEBI:61961"/>
        <dbReference type="EC" id="2.1.1.354"/>
    </reaction>
</comment>
<comment type="subunit">
    <text evidence="3">Component of the SET1B/COMPASS complex.</text>
</comment>
<comment type="subcellular location">
    <subcellularLocation>
        <location evidence="3">Nucleus speckle</location>
    </subcellularLocation>
    <subcellularLocation>
        <location evidence="3">Chromosome</location>
    </subcellularLocation>
</comment>
<comment type="similarity">
    <text evidence="6">Belongs to the class V-like SAM-binding methyltransferase superfamily.</text>
</comment>
<accession>Q08D57</accession>
<gene>
    <name type="primary">setd1b</name>
</gene>
<keyword id="KW-0010">Activator</keyword>
<keyword id="KW-0156">Chromatin regulator</keyword>
<keyword id="KW-0158">Chromosome</keyword>
<keyword id="KW-0489">Methyltransferase</keyword>
<keyword id="KW-0539">Nucleus</keyword>
<keyword id="KW-1185">Reference proteome</keyword>
<keyword id="KW-0694">RNA-binding</keyword>
<keyword id="KW-0949">S-adenosyl-L-methionine</keyword>
<keyword id="KW-0804">Transcription</keyword>
<keyword id="KW-0805">Transcription regulation</keyword>
<keyword id="KW-0808">Transferase</keyword>
<name>SET1B_XENTR</name>
<proteinExistence type="evidence at transcript level"/>
<reference key="1">
    <citation type="submission" date="2006-09" db="EMBL/GenBank/DDBJ databases">
        <authorList>
            <consortium name="NIH - Xenopus Gene Collection (XGC) project"/>
        </authorList>
    </citation>
    <scope>NUCLEOTIDE SEQUENCE [LARGE SCALE MRNA]</scope>
    <source>
        <tissue>Brain</tissue>
    </source>
</reference>
<dbReference type="EC" id="2.1.1.354" evidence="3"/>
<dbReference type="EMBL" id="BC123932">
    <property type="protein sequence ID" value="AAI23933.1"/>
    <property type="molecule type" value="mRNA"/>
</dbReference>
<dbReference type="RefSeq" id="NP_001072649.1">
    <property type="nucleotide sequence ID" value="NM_001079181.1"/>
</dbReference>
<dbReference type="SMR" id="Q08D57"/>
<dbReference type="FunCoup" id="Q08D57">
    <property type="interactions" value="1871"/>
</dbReference>
<dbReference type="STRING" id="8364.ENSXETP00000000486"/>
<dbReference type="PaxDb" id="8364-ENSXETP00000008143"/>
<dbReference type="GeneID" id="780106"/>
<dbReference type="KEGG" id="xtr:780106"/>
<dbReference type="AGR" id="Xenbase:XB-GENE-5842344"/>
<dbReference type="CTD" id="23067"/>
<dbReference type="Xenbase" id="XB-GENE-5842344">
    <property type="gene designation" value="setd1b"/>
</dbReference>
<dbReference type="eggNOG" id="KOG1080">
    <property type="taxonomic scope" value="Eukaryota"/>
</dbReference>
<dbReference type="InParanoid" id="Q08D57"/>
<dbReference type="OMA" id="LPCMHGD"/>
<dbReference type="OrthoDB" id="308383at2759"/>
<dbReference type="Reactome" id="R-XTR-8936459">
    <property type="pathway name" value="RUNX1 regulates genes involved in megakaryocyte differentiation and platelet function"/>
</dbReference>
<dbReference type="Reactome" id="R-XTR-9772755">
    <property type="pathway name" value="Formation of WDR5-containing histone-modifying complexes"/>
</dbReference>
<dbReference type="Proteomes" id="UP000008143">
    <property type="component" value="Chromosome 1"/>
</dbReference>
<dbReference type="GO" id="GO:0005694">
    <property type="term" value="C:chromosome"/>
    <property type="evidence" value="ECO:0007669"/>
    <property type="project" value="UniProtKB-SubCell"/>
</dbReference>
<dbReference type="GO" id="GO:0005737">
    <property type="term" value="C:cytoplasm"/>
    <property type="evidence" value="ECO:0000250"/>
    <property type="project" value="UniProtKB"/>
</dbReference>
<dbReference type="GO" id="GO:0016607">
    <property type="term" value="C:nuclear speck"/>
    <property type="evidence" value="ECO:0007669"/>
    <property type="project" value="UniProtKB-SubCell"/>
</dbReference>
<dbReference type="GO" id="GO:0005634">
    <property type="term" value="C:nucleus"/>
    <property type="evidence" value="ECO:0000250"/>
    <property type="project" value="UniProtKB"/>
</dbReference>
<dbReference type="GO" id="GO:0048188">
    <property type="term" value="C:Set1C/COMPASS complex"/>
    <property type="evidence" value="ECO:0007669"/>
    <property type="project" value="InterPro"/>
</dbReference>
<dbReference type="GO" id="GO:0140999">
    <property type="term" value="F:histone H3K4 trimethyltransferase activity"/>
    <property type="evidence" value="ECO:0007669"/>
    <property type="project" value="UniProtKB-EC"/>
</dbReference>
<dbReference type="GO" id="GO:0003723">
    <property type="term" value="F:RNA binding"/>
    <property type="evidence" value="ECO:0007669"/>
    <property type="project" value="UniProtKB-KW"/>
</dbReference>
<dbReference type="GO" id="GO:0032259">
    <property type="term" value="P:methylation"/>
    <property type="evidence" value="ECO:0007669"/>
    <property type="project" value="UniProtKB-KW"/>
</dbReference>
<dbReference type="CDD" id="cd12549">
    <property type="entry name" value="RRM_Set1B"/>
    <property type="match status" value="1"/>
</dbReference>
<dbReference type="CDD" id="cd19169">
    <property type="entry name" value="SET_SETD1"/>
    <property type="match status" value="1"/>
</dbReference>
<dbReference type="FunFam" id="2.170.270.10:FF:000010">
    <property type="entry name" value="Histone-lysine N-methyltransferase"/>
    <property type="match status" value="1"/>
</dbReference>
<dbReference type="FunFam" id="3.30.70.330:FF:000178">
    <property type="entry name" value="Histone-lysine N-methyltransferase"/>
    <property type="match status" value="1"/>
</dbReference>
<dbReference type="Gene3D" id="3.30.70.330">
    <property type="match status" value="1"/>
</dbReference>
<dbReference type="Gene3D" id="2.170.270.10">
    <property type="entry name" value="SET domain"/>
    <property type="match status" value="1"/>
</dbReference>
<dbReference type="InterPro" id="IPR024657">
    <property type="entry name" value="COMPASS_Set1_N-SET"/>
</dbReference>
<dbReference type="InterPro" id="IPR012677">
    <property type="entry name" value="Nucleotide-bd_a/b_plait_sf"/>
</dbReference>
<dbReference type="InterPro" id="IPR003616">
    <property type="entry name" value="Post-SET_dom"/>
</dbReference>
<dbReference type="InterPro" id="IPR035979">
    <property type="entry name" value="RBD_domain_sf"/>
</dbReference>
<dbReference type="InterPro" id="IPR000504">
    <property type="entry name" value="RRM_dom"/>
</dbReference>
<dbReference type="InterPro" id="IPR044570">
    <property type="entry name" value="Set1-like"/>
</dbReference>
<dbReference type="InterPro" id="IPR034468">
    <property type="entry name" value="Set1B_RRM"/>
</dbReference>
<dbReference type="InterPro" id="IPR001214">
    <property type="entry name" value="SET_dom"/>
</dbReference>
<dbReference type="InterPro" id="IPR046341">
    <property type="entry name" value="SET_dom_sf"/>
</dbReference>
<dbReference type="InterPro" id="IPR037841">
    <property type="entry name" value="SET_SETD1A/B"/>
</dbReference>
<dbReference type="PANTHER" id="PTHR45814">
    <property type="entry name" value="HISTONE-LYSINE N-METHYLTRANSFERASE SETD1"/>
    <property type="match status" value="1"/>
</dbReference>
<dbReference type="PANTHER" id="PTHR45814:SF1">
    <property type="entry name" value="HISTONE-LYSINE N-METHYLTRANSFERASE SETD1B"/>
    <property type="match status" value="1"/>
</dbReference>
<dbReference type="Pfam" id="PF11764">
    <property type="entry name" value="N-SET"/>
    <property type="match status" value="1"/>
</dbReference>
<dbReference type="Pfam" id="PF00076">
    <property type="entry name" value="RRM_1"/>
    <property type="match status" value="1"/>
</dbReference>
<dbReference type="Pfam" id="PF00856">
    <property type="entry name" value="SET"/>
    <property type="match status" value="1"/>
</dbReference>
<dbReference type="SMART" id="SM01291">
    <property type="entry name" value="N-SET"/>
    <property type="match status" value="1"/>
</dbReference>
<dbReference type="SMART" id="SM00508">
    <property type="entry name" value="PostSET"/>
    <property type="match status" value="1"/>
</dbReference>
<dbReference type="SMART" id="SM00360">
    <property type="entry name" value="RRM"/>
    <property type="match status" value="1"/>
</dbReference>
<dbReference type="SMART" id="SM00317">
    <property type="entry name" value="SET"/>
    <property type="match status" value="1"/>
</dbReference>
<dbReference type="SUPFAM" id="SSF54928">
    <property type="entry name" value="RNA-binding domain, RBD"/>
    <property type="match status" value="1"/>
</dbReference>
<dbReference type="SUPFAM" id="SSF82199">
    <property type="entry name" value="SET domain"/>
    <property type="match status" value="1"/>
</dbReference>
<dbReference type="PROSITE" id="PS50868">
    <property type="entry name" value="POST_SET"/>
    <property type="match status" value="1"/>
</dbReference>
<dbReference type="PROSITE" id="PS50102">
    <property type="entry name" value="RRM"/>
    <property type="match status" value="1"/>
</dbReference>
<dbReference type="PROSITE" id="PS50280">
    <property type="entry name" value="SET"/>
    <property type="match status" value="1"/>
</dbReference>
<organism>
    <name type="scientific">Xenopus tropicalis</name>
    <name type="common">Western clawed frog</name>
    <name type="synonym">Silurana tropicalis</name>
    <dbReference type="NCBI Taxonomy" id="8364"/>
    <lineage>
        <taxon>Eukaryota</taxon>
        <taxon>Metazoa</taxon>
        <taxon>Chordata</taxon>
        <taxon>Craniata</taxon>
        <taxon>Vertebrata</taxon>
        <taxon>Euteleostomi</taxon>
        <taxon>Amphibia</taxon>
        <taxon>Batrachia</taxon>
        <taxon>Anura</taxon>
        <taxon>Pipoidea</taxon>
        <taxon>Pipidae</taxon>
        <taxon>Xenopodinae</taxon>
        <taxon>Xenopus</taxon>
        <taxon>Silurana</taxon>
    </lineage>
</organism>
<feature type="chain" id="PRO_0000316998" description="Histone-lysine N-methyltransferase SETD1B">
    <location>
        <begin position="1"/>
        <end position="1956"/>
    </location>
</feature>
<feature type="domain" description="RRM" evidence="5">
    <location>
        <begin position="111"/>
        <end position="199"/>
    </location>
</feature>
<feature type="domain" description="SET" evidence="6">
    <location>
        <begin position="1817"/>
        <end position="1934"/>
    </location>
</feature>
<feature type="domain" description="Post-SET" evidence="4">
    <location>
        <begin position="1940"/>
        <end position="1956"/>
    </location>
</feature>
<feature type="region of interest" description="Disordered" evidence="7">
    <location>
        <begin position="1"/>
        <end position="46"/>
    </location>
</feature>
<feature type="region of interest" description="Disordered" evidence="7">
    <location>
        <begin position="226"/>
        <end position="478"/>
    </location>
</feature>
<feature type="region of interest" description="Disordered" evidence="7">
    <location>
        <begin position="502"/>
        <end position="637"/>
    </location>
</feature>
<feature type="region of interest" description="Disordered" evidence="7">
    <location>
        <begin position="662"/>
        <end position="696"/>
    </location>
</feature>
<feature type="region of interest" description="Disordered" evidence="7">
    <location>
        <begin position="926"/>
        <end position="1148"/>
    </location>
</feature>
<feature type="region of interest" description="Disordered" evidence="7">
    <location>
        <begin position="1341"/>
        <end position="1386"/>
    </location>
</feature>
<feature type="region of interest" description="Disordered" evidence="7">
    <location>
        <begin position="1420"/>
        <end position="1464"/>
    </location>
</feature>
<feature type="region of interest" description="Disordered" evidence="7">
    <location>
        <begin position="1512"/>
        <end position="1553"/>
    </location>
</feature>
<feature type="region of interest" description="Disordered" evidence="7">
    <location>
        <begin position="1627"/>
        <end position="1655"/>
    </location>
</feature>
<feature type="region of interest" description="Disordered" evidence="7">
    <location>
        <begin position="1766"/>
        <end position="1790"/>
    </location>
</feature>
<feature type="short sequence motif" description="RxxxRR motif" evidence="2">
    <location>
        <begin position="1788"/>
        <end position="1793"/>
    </location>
</feature>
<feature type="compositionally biased region" description="Basic and acidic residues" evidence="7">
    <location>
        <begin position="1"/>
        <end position="20"/>
    </location>
</feature>
<feature type="compositionally biased region" description="Polar residues" evidence="7">
    <location>
        <begin position="254"/>
        <end position="290"/>
    </location>
</feature>
<feature type="compositionally biased region" description="Polar residues" evidence="7">
    <location>
        <begin position="298"/>
        <end position="312"/>
    </location>
</feature>
<feature type="compositionally biased region" description="Polar residues" evidence="7">
    <location>
        <begin position="346"/>
        <end position="361"/>
    </location>
</feature>
<feature type="compositionally biased region" description="Pro residues" evidence="7">
    <location>
        <begin position="363"/>
        <end position="373"/>
    </location>
</feature>
<feature type="compositionally biased region" description="Polar residues" evidence="7">
    <location>
        <begin position="375"/>
        <end position="407"/>
    </location>
</feature>
<feature type="compositionally biased region" description="Polar residues" evidence="7">
    <location>
        <begin position="416"/>
        <end position="432"/>
    </location>
</feature>
<feature type="compositionally biased region" description="Polar residues" evidence="7">
    <location>
        <begin position="451"/>
        <end position="464"/>
    </location>
</feature>
<feature type="compositionally biased region" description="Low complexity" evidence="7">
    <location>
        <begin position="517"/>
        <end position="527"/>
    </location>
</feature>
<feature type="compositionally biased region" description="Polar residues" evidence="7">
    <location>
        <begin position="535"/>
        <end position="551"/>
    </location>
</feature>
<feature type="compositionally biased region" description="Polar residues" evidence="7">
    <location>
        <begin position="575"/>
        <end position="593"/>
    </location>
</feature>
<feature type="compositionally biased region" description="Basic and acidic residues" evidence="7">
    <location>
        <begin position="594"/>
        <end position="605"/>
    </location>
</feature>
<feature type="compositionally biased region" description="Acidic residues" evidence="7">
    <location>
        <begin position="625"/>
        <end position="634"/>
    </location>
</feature>
<feature type="compositionally biased region" description="Acidic residues" evidence="7">
    <location>
        <begin position="986"/>
        <end position="1000"/>
    </location>
</feature>
<feature type="compositionally biased region" description="Basic and acidic residues" evidence="7">
    <location>
        <begin position="1001"/>
        <end position="1011"/>
    </location>
</feature>
<feature type="compositionally biased region" description="Acidic residues" evidence="7">
    <location>
        <begin position="1068"/>
        <end position="1122"/>
    </location>
</feature>
<feature type="compositionally biased region" description="Basic and acidic residues" evidence="7">
    <location>
        <begin position="1341"/>
        <end position="1352"/>
    </location>
</feature>
<feature type="compositionally biased region" description="Polar residues" evidence="7">
    <location>
        <begin position="1358"/>
        <end position="1367"/>
    </location>
</feature>
<feature type="compositionally biased region" description="Polar residues" evidence="7">
    <location>
        <begin position="1450"/>
        <end position="1462"/>
    </location>
</feature>
<feature type="compositionally biased region" description="Basic and acidic residues" evidence="7">
    <location>
        <begin position="1541"/>
        <end position="1551"/>
    </location>
</feature>
<feature type="compositionally biased region" description="Basic residues" evidence="7">
    <location>
        <begin position="1628"/>
        <end position="1638"/>
    </location>
</feature>
<feature type="compositionally biased region" description="Polar residues" evidence="7">
    <location>
        <begin position="1769"/>
        <end position="1783"/>
    </location>
</feature>
<feature type="binding site" evidence="6">
    <location>
        <position position="1933"/>
    </location>
    <ligand>
        <name>S-adenosyl-L-methionine</name>
        <dbReference type="ChEBI" id="CHEBI:59789"/>
    </ligand>
</feature>